<keyword id="KW-0007">Acetylation</keyword>
<keyword id="KW-0067">ATP-binding</keyword>
<keyword id="KW-0119">Carbohydrate metabolism</keyword>
<keyword id="KW-0418">Kinase</keyword>
<keyword id="KW-0511">Multifunctional enzyme</keyword>
<keyword id="KW-0547">Nucleotide-binding</keyword>
<keyword id="KW-0548">Nucleotidyltransferase</keyword>
<keyword id="KW-1185">Reference proteome</keyword>
<keyword id="KW-0808">Transferase</keyword>
<evidence type="ECO:0000255" key="1">
    <source>
        <dbReference type="HAMAP-Rule" id="MF_01603"/>
    </source>
</evidence>
<gene>
    <name evidence="1" type="primary">hldE</name>
    <name type="ordered locus">EcE24377A_3515</name>
</gene>
<feature type="chain" id="PRO_0000323488" description="Bifunctional protein HldE">
    <location>
        <begin position="1"/>
        <end position="477"/>
    </location>
</feature>
<feature type="region of interest" description="Ribokinase">
    <location>
        <begin position="1"/>
        <end position="318"/>
    </location>
</feature>
<feature type="region of interest" description="Cytidylyltransferase">
    <location>
        <begin position="344"/>
        <end position="477"/>
    </location>
</feature>
<feature type="active site" evidence="1">
    <location>
        <position position="264"/>
    </location>
</feature>
<feature type="binding site" evidence="1">
    <location>
        <begin position="195"/>
        <end position="198"/>
    </location>
    <ligand>
        <name>ATP</name>
        <dbReference type="ChEBI" id="CHEBI:30616"/>
    </ligand>
</feature>
<feature type="modified residue" description="N6-acetyllysine" evidence="1">
    <location>
        <position position="179"/>
    </location>
</feature>
<dbReference type="EC" id="2.7.1.167" evidence="1"/>
<dbReference type="EC" id="2.7.7.70" evidence="1"/>
<dbReference type="EMBL" id="CP000800">
    <property type="protein sequence ID" value="ABV21002.1"/>
    <property type="molecule type" value="Genomic_DNA"/>
</dbReference>
<dbReference type="RefSeq" id="WP_000869178.1">
    <property type="nucleotide sequence ID" value="NC_009801.1"/>
</dbReference>
<dbReference type="SMR" id="A7ZRT3"/>
<dbReference type="GeneID" id="75205361"/>
<dbReference type="KEGG" id="ecw:EcE24377A_3515"/>
<dbReference type="HOGENOM" id="CLU_021150_2_1_6"/>
<dbReference type="UniPathway" id="UPA00356">
    <property type="reaction ID" value="UER00437"/>
</dbReference>
<dbReference type="UniPathway" id="UPA00356">
    <property type="reaction ID" value="UER00439"/>
</dbReference>
<dbReference type="Proteomes" id="UP000001122">
    <property type="component" value="Chromosome"/>
</dbReference>
<dbReference type="GO" id="GO:0005829">
    <property type="term" value="C:cytosol"/>
    <property type="evidence" value="ECO:0007669"/>
    <property type="project" value="TreeGrafter"/>
</dbReference>
<dbReference type="GO" id="GO:0005524">
    <property type="term" value="F:ATP binding"/>
    <property type="evidence" value="ECO:0007669"/>
    <property type="project" value="UniProtKB-UniRule"/>
</dbReference>
<dbReference type="GO" id="GO:0033785">
    <property type="term" value="F:heptose 7-phosphate kinase activity"/>
    <property type="evidence" value="ECO:0007669"/>
    <property type="project" value="UniProtKB-UniRule"/>
</dbReference>
<dbReference type="GO" id="GO:0033786">
    <property type="term" value="F:heptose-1-phosphate adenylyltransferase activity"/>
    <property type="evidence" value="ECO:0007669"/>
    <property type="project" value="UniProtKB-UniRule"/>
</dbReference>
<dbReference type="GO" id="GO:0016773">
    <property type="term" value="F:phosphotransferase activity, alcohol group as acceptor"/>
    <property type="evidence" value="ECO:0007669"/>
    <property type="project" value="InterPro"/>
</dbReference>
<dbReference type="GO" id="GO:0097171">
    <property type="term" value="P:ADP-L-glycero-beta-D-manno-heptose biosynthetic process"/>
    <property type="evidence" value="ECO:0007669"/>
    <property type="project" value="UniProtKB-UniPathway"/>
</dbReference>
<dbReference type="CDD" id="cd01172">
    <property type="entry name" value="RfaE_like"/>
    <property type="match status" value="1"/>
</dbReference>
<dbReference type="FunFam" id="3.40.1190.20:FF:000002">
    <property type="entry name" value="Bifunctional protein HldE"/>
    <property type="match status" value="1"/>
</dbReference>
<dbReference type="FunFam" id="3.40.50.620:FF:000028">
    <property type="entry name" value="Bifunctional protein HldE"/>
    <property type="match status" value="1"/>
</dbReference>
<dbReference type="Gene3D" id="3.40.1190.20">
    <property type="match status" value="1"/>
</dbReference>
<dbReference type="Gene3D" id="3.40.50.620">
    <property type="entry name" value="HUPs"/>
    <property type="match status" value="1"/>
</dbReference>
<dbReference type="HAMAP" id="MF_01603">
    <property type="entry name" value="HldE"/>
    <property type="match status" value="1"/>
</dbReference>
<dbReference type="InterPro" id="IPR023030">
    <property type="entry name" value="Bifunc_HldE"/>
</dbReference>
<dbReference type="InterPro" id="IPR002173">
    <property type="entry name" value="Carboh/pur_kinase_PfkB_CS"/>
</dbReference>
<dbReference type="InterPro" id="IPR004821">
    <property type="entry name" value="Cyt_trans-like"/>
</dbReference>
<dbReference type="InterPro" id="IPR011611">
    <property type="entry name" value="PfkB_dom"/>
</dbReference>
<dbReference type="InterPro" id="IPR011913">
    <property type="entry name" value="RfaE_dom_I"/>
</dbReference>
<dbReference type="InterPro" id="IPR011914">
    <property type="entry name" value="RfaE_dom_II"/>
</dbReference>
<dbReference type="InterPro" id="IPR029056">
    <property type="entry name" value="Ribokinase-like"/>
</dbReference>
<dbReference type="InterPro" id="IPR014729">
    <property type="entry name" value="Rossmann-like_a/b/a_fold"/>
</dbReference>
<dbReference type="NCBIfam" id="TIGR00125">
    <property type="entry name" value="cyt_tran_rel"/>
    <property type="match status" value="1"/>
</dbReference>
<dbReference type="NCBIfam" id="NF008454">
    <property type="entry name" value="PRK11316.1"/>
    <property type="match status" value="1"/>
</dbReference>
<dbReference type="NCBIfam" id="TIGR02198">
    <property type="entry name" value="rfaE_dom_I"/>
    <property type="match status" value="1"/>
</dbReference>
<dbReference type="NCBIfam" id="TIGR02199">
    <property type="entry name" value="rfaE_dom_II"/>
    <property type="match status" value="1"/>
</dbReference>
<dbReference type="PANTHER" id="PTHR46969">
    <property type="entry name" value="BIFUNCTIONAL PROTEIN HLDE"/>
    <property type="match status" value="1"/>
</dbReference>
<dbReference type="PANTHER" id="PTHR46969:SF1">
    <property type="entry name" value="BIFUNCTIONAL PROTEIN HLDE"/>
    <property type="match status" value="1"/>
</dbReference>
<dbReference type="Pfam" id="PF01467">
    <property type="entry name" value="CTP_transf_like"/>
    <property type="match status" value="1"/>
</dbReference>
<dbReference type="Pfam" id="PF00294">
    <property type="entry name" value="PfkB"/>
    <property type="match status" value="1"/>
</dbReference>
<dbReference type="SUPFAM" id="SSF52374">
    <property type="entry name" value="Nucleotidylyl transferase"/>
    <property type="match status" value="1"/>
</dbReference>
<dbReference type="SUPFAM" id="SSF53613">
    <property type="entry name" value="Ribokinase-like"/>
    <property type="match status" value="1"/>
</dbReference>
<dbReference type="PROSITE" id="PS00583">
    <property type="entry name" value="PFKB_KINASES_1"/>
    <property type="match status" value="1"/>
</dbReference>
<sequence length="477" mass="51051">MKVTLPEFERAGVMVVGDVMLDRYWYGPTSRISPEAPVPVVKVNTIEERPGGAANVAMNIASLGANARLVGLTGIDDAARALSKSLADVNVKCDFVSVPTHPTITKLRVLSRNQQLIRLDFEEGFEGVDPQPLHERINQALSSIGALVLSDYAKGALASVQQMIQLARKAGVPVLIDPKGTDFERYRGATLLTPNLSEFEAVVGKCKTEEEIVERGMKLIADYELSALLVTRSEQGMSLLQPGKAPLHMPTQAQEVYDVTGAGDTVIGVLAATLAAGNSLEEACFFANAAAGVVVGKLGTSTVSPIELENAVRGRADTGFGVMTEEELKLAVAAARKRGEKVVMTNGVFDILHAGHVSYLANARKLGDRLIVAVNSDASTKRLKGDSRPVNPLEQRMIVLGALEAVDWVVSFEEDTPQRLIAGILPDLLVKGGDYKPEEIAGSKEVWANGGEVLVLNFEDGCSTTNIIKKIQQDKKG</sequence>
<comment type="function">
    <text evidence="1">Catalyzes the phosphorylation of D-glycero-D-manno-heptose 7-phosphate at the C-1 position to selectively form D-glycero-beta-D-manno-heptose-1,7-bisphosphate.</text>
</comment>
<comment type="function">
    <text evidence="1">Catalyzes the ADP transfer from ATP to D-glycero-beta-D-manno-heptose 1-phosphate, yielding ADP-D-glycero-beta-D-manno-heptose.</text>
</comment>
<comment type="catalytic activity">
    <reaction evidence="1">
        <text>D-glycero-beta-D-manno-heptose 7-phosphate + ATP = D-glycero-beta-D-manno-heptose 1,7-bisphosphate + ADP + H(+)</text>
        <dbReference type="Rhea" id="RHEA:27473"/>
        <dbReference type="ChEBI" id="CHEBI:15378"/>
        <dbReference type="ChEBI" id="CHEBI:30616"/>
        <dbReference type="ChEBI" id="CHEBI:60204"/>
        <dbReference type="ChEBI" id="CHEBI:60208"/>
        <dbReference type="ChEBI" id="CHEBI:456216"/>
        <dbReference type="EC" id="2.7.1.167"/>
    </reaction>
</comment>
<comment type="catalytic activity">
    <reaction evidence="1">
        <text>D-glycero-beta-D-manno-heptose 1-phosphate + ATP + H(+) = ADP-D-glycero-beta-D-manno-heptose + diphosphate</text>
        <dbReference type="Rhea" id="RHEA:27465"/>
        <dbReference type="ChEBI" id="CHEBI:15378"/>
        <dbReference type="ChEBI" id="CHEBI:30616"/>
        <dbReference type="ChEBI" id="CHEBI:33019"/>
        <dbReference type="ChEBI" id="CHEBI:59967"/>
        <dbReference type="ChEBI" id="CHEBI:61593"/>
        <dbReference type="EC" id="2.7.7.70"/>
    </reaction>
</comment>
<comment type="pathway">
    <text evidence="1">Nucleotide-sugar biosynthesis; ADP-L-glycero-beta-D-manno-heptose biosynthesis; ADP-L-glycero-beta-D-manno-heptose from D-glycero-beta-D-manno-heptose 7-phosphate: step 1/4.</text>
</comment>
<comment type="pathway">
    <text evidence="1">Nucleotide-sugar biosynthesis; ADP-L-glycero-beta-D-manno-heptose biosynthesis; ADP-L-glycero-beta-D-manno-heptose from D-glycero-beta-D-manno-heptose 7-phosphate: step 3/4.</text>
</comment>
<comment type="subunit">
    <text evidence="1">Homodimer.</text>
</comment>
<comment type="similarity">
    <text evidence="1">In the N-terminal section; belongs to the carbohydrate kinase PfkB family.</text>
</comment>
<comment type="similarity">
    <text evidence="1">In the C-terminal section; belongs to the cytidylyltransferase family.</text>
</comment>
<proteinExistence type="inferred from homology"/>
<protein>
    <recommendedName>
        <fullName evidence="1">Bifunctional protein HldE</fullName>
    </recommendedName>
    <domain>
        <recommendedName>
            <fullName evidence="1">D-beta-D-heptose 7-phosphate kinase</fullName>
            <ecNumber evidence="1">2.7.1.167</ecNumber>
        </recommendedName>
        <alternativeName>
            <fullName evidence="1">D-beta-D-heptose 7-phosphotransferase</fullName>
        </alternativeName>
        <alternativeName>
            <fullName evidence="1">D-glycero-beta-D-manno-heptose-7-phosphate kinase</fullName>
        </alternativeName>
    </domain>
    <domain>
        <recommendedName>
            <fullName evidence="1">D-beta-D-heptose 1-phosphate adenylyltransferase</fullName>
            <ecNumber evidence="1">2.7.7.70</ecNumber>
        </recommendedName>
        <alternativeName>
            <fullName evidence="1">D-glycero-beta-D-manno-heptose 1-phosphate adenylyltransferase</fullName>
        </alternativeName>
    </domain>
</protein>
<reference key="1">
    <citation type="journal article" date="2008" name="J. Bacteriol.">
        <title>The pangenome structure of Escherichia coli: comparative genomic analysis of E. coli commensal and pathogenic isolates.</title>
        <authorList>
            <person name="Rasko D.A."/>
            <person name="Rosovitz M.J."/>
            <person name="Myers G.S.A."/>
            <person name="Mongodin E.F."/>
            <person name="Fricke W.F."/>
            <person name="Gajer P."/>
            <person name="Crabtree J."/>
            <person name="Sebaihia M."/>
            <person name="Thomson N.R."/>
            <person name="Chaudhuri R."/>
            <person name="Henderson I.R."/>
            <person name="Sperandio V."/>
            <person name="Ravel J."/>
        </authorList>
    </citation>
    <scope>NUCLEOTIDE SEQUENCE [LARGE SCALE GENOMIC DNA]</scope>
    <source>
        <strain>E24377A / ETEC</strain>
    </source>
</reference>
<accession>A7ZRT3</accession>
<organism>
    <name type="scientific">Escherichia coli O139:H28 (strain E24377A / ETEC)</name>
    <dbReference type="NCBI Taxonomy" id="331111"/>
    <lineage>
        <taxon>Bacteria</taxon>
        <taxon>Pseudomonadati</taxon>
        <taxon>Pseudomonadota</taxon>
        <taxon>Gammaproteobacteria</taxon>
        <taxon>Enterobacterales</taxon>
        <taxon>Enterobacteriaceae</taxon>
        <taxon>Escherichia</taxon>
    </lineage>
</organism>
<name>HLDE_ECO24</name>